<sequence length="727" mass="80103">MDTKVETGGKCPVAHGPAGAKGRGNRDWWPEQLDVQILHQKNKIADPMGPDFDYAEEFRKLDYEALKSDLHALMTDSQDWWPADFGHYGGLFVRMAWHSAGTYRITDGRGGAGAGQQRFAPLNSWPDNANLDKARRLLWPIKQKYGNKISWADLFILTGNVALESMGFKTFGFAGGRADTWEPEELFWGPEGTWLGDERYSGERQLSEPLGAVQMGLIYVNPEGPNGNPDPIAAARDIRETFSRMAMNDEETVALIAGGHTFGKTHGAGDPSLIGAEPEGGALEDQGLGWKSKFGTGFGADTITGGPEVTWTQTPTRWSNFFFENLFNFEWELTKSPAGAHQWKAKNAEPSIPDAHDPSKKHLPTMLTTDLSLRFDPAYEKISRRFLENPDQFADAFARAWFKLTHRDMGPKVRYVGPEVPSEDLIWQDVIPPVDHPLVDDRDVADLKAKVIASGLSVQELVSTAWASASTFRGSDKRGGANGARIRLAPQKDWDVNHPAQLAKVLSVLEGFQQEFNAGQSAGKKISLADLIVLAGAAGVEKAAKAGGHDVTVPFTPGRTDASQEQTDVASFNALKPRADAFRNYLSGHQFMKPEEALVDRARLLTLTAPEMTVLIGGLRVLKAGQPEHGVLTRNPEALTNDFFVNLLDMRTQWAPVAGKEGVYEGRDRKSGELLWTGTRVDLIFGSHSQLRALAEVYAQSDIKEKFVKDFVAAWTKVMNADRFDLV</sequence>
<comment type="function">
    <text evidence="1">Bifunctional enzyme with both catalase and broad-spectrum peroxidase activity.</text>
</comment>
<comment type="catalytic activity">
    <reaction evidence="1">
        <text>H2O2 + AH2 = A + 2 H2O</text>
        <dbReference type="Rhea" id="RHEA:30275"/>
        <dbReference type="ChEBI" id="CHEBI:13193"/>
        <dbReference type="ChEBI" id="CHEBI:15377"/>
        <dbReference type="ChEBI" id="CHEBI:16240"/>
        <dbReference type="ChEBI" id="CHEBI:17499"/>
        <dbReference type="EC" id="1.11.1.21"/>
    </reaction>
</comment>
<comment type="catalytic activity">
    <reaction evidence="1">
        <text>2 H2O2 = O2 + 2 H2O</text>
        <dbReference type="Rhea" id="RHEA:20309"/>
        <dbReference type="ChEBI" id="CHEBI:15377"/>
        <dbReference type="ChEBI" id="CHEBI:15379"/>
        <dbReference type="ChEBI" id="CHEBI:16240"/>
        <dbReference type="EC" id="1.11.1.21"/>
    </reaction>
</comment>
<comment type="cofactor">
    <cofactor evidence="1">
        <name>heme b</name>
        <dbReference type="ChEBI" id="CHEBI:60344"/>
    </cofactor>
    <text evidence="1">Binds 1 heme b (iron(II)-protoporphyrin IX) group per dimer.</text>
</comment>
<comment type="subunit">
    <text evidence="1">Homodimer or homotetramer.</text>
</comment>
<comment type="PTM">
    <text evidence="1">Formation of the three residue Trp-Tyr-Met cross-link is important for the catalase, but not the peroxidase activity of the enzyme.</text>
</comment>
<comment type="similarity">
    <text evidence="1">Belongs to the peroxidase family. Peroxidase/catalase subfamily.</text>
</comment>
<evidence type="ECO:0000255" key="1">
    <source>
        <dbReference type="HAMAP-Rule" id="MF_01961"/>
    </source>
</evidence>
<evidence type="ECO:0000256" key="2">
    <source>
        <dbReference type="SAM" id="MobiDB-lite"/>
    </source>
</evidence>
<proteinExistence type="inferred from homology"/>
<dbReference type="EC" id="1.11.1.21" evidence="1"/>
<dbReference type="EMBL" id="CP000634">
    <property type="protein sequence ID" value="ACM38360.1"/>
    <property type="molecule type" value="Genomic_DNA"/>
</dbReference>
<dbReference type="RefSeq" id="WP_012653602.1">
    <property type="nucleotide sequence ID" value="NC_011988.1"/>
</dbReference>
<dbReference type="SMR" id="B9K0G2"/>
<dbReference type="STRING" id="311402.Avi_5190"/>
<dbReference type="KEGG" id="avi:Avi_5190"/>
<dbReference type="eggNOG" id="COG0376">
    <property type="taxonomic scope" value="Bacteria"/>
</dbReference>
<dbReference type="HOGENOM" id="CLU_025424_2_0_5"/>
<dbReference type="Proteomes" id="UP000001596">
    <property type="component" value="Chromosome 2"/>
</dbReference>
<dbReference type="GO" id="GO:0005829">
    <property type="term" value="C:cytosol"/>
    <property type="evidence" value="ECO:0007669"/>
    <property type="project" value="TreeGrafter"/>
</dbReference>
<dbReference type="GO" id="GO:0004096">
    <property type="term" value="F:catalase activity"/>
    <property type="evidence" value="ECO:0007669"/>
    <property type="project" value="UniProtKB-UniRule"/>
</dbReference>
<dbReference type="GO" id="GO:0020037">
    <property type="term" value="F:heme binding"/>
    <property type="evidence" value="ECO:0007669"/>
    <property type="project" value="InterPro"/>
</dbReference>
<dbReference type="GO" id="GO:0046872">
    <property type="term" value="F:metal ion binding"/>
    <property type="evidence" value="ECO:0007669"/>
    <property type="project" value="UniProtKB-KW"/>
</dbReference>
<dbReference type="GO" id="GO:0070301">
    <property type="term" value="P:cellular response to hydrogen peroxide"/>
    <property type="evidence" value="ECO:0007669"/>
    <property type="project" value="TreeGrafter"/>
</dbReference>
<dbReference type="GO" id="GO:0042744">
    <property type="term" value="P:hydrogen peroxide catabolic process"/>
    <property type="evidence" value="ECO:0007669"/>
    <property type="project" value="UniProtKB-KW"/>
</dbReference>
<dbReference type="CDD" id="cd00649">
    <property type="entry name" value="catalase_peroxidase_1"/>
    <property type="match status" value="1"/>
</dbReference>
<dbReference type="CDD" id="cd08200">
    <property type="entry name" value="catalase_peroxidase_2"/>
    <property type="match status" value="1"/>
</dbReference>
<dbReference type="FunFam" id="1.10.420.10:FF:000002">
    <property type="entry name" value="Catalase-peroxidase"/>
    <property type="match status" value="1"/>
</dbReference>
<dbReference type="FunFam" id="1.10.420.10:FF:000004">
    <property type="entry name" value="Catalase-peroxidase"/>
    <property type="match status" value="1"/>
</dbReference>
<dbReference type="FunFam" id="1.10.520.10:FF:000002">
    <property type="entry name" value="Catalase-peroxidase"/>
    <property type="match status" value="1"/>
</dbReference>
<dbReference type="Gene3D" id="1.10.520.10">
    <property type="match status" value="2"/>
</dbReference>
<dbReference type="Gene3D" id="1.10.420.10">
    <property type="entry name" value="Peroxidase, domain 2"/>
    <property type="match status" value="2"/>
</dbReference>
<dbReference type="HAMAP" id="MF_01961">
    <property type="entry name" value="Catal_peroxid"/>
    <property type="match status" value="1"/>
</dbReference>
<dbReference type="InterPro" id="IPR000763">
    <property type="entry name" value="Catalase_peroxidase"/>
</dbReference>
<dbReference type="InterPro" id="IPR002016">
    <property type="entry name" value="Haem_peroxidase"/>
</dbReference>
<dbReference type="InterPro" id="IPR010255">
    <property type="entry name" value="Haem_peroxidase_sf"/>
</dbReference>
<dbReference type="InterPro" id="IPR019794">
    <property type="entry name" value="Peroxidases_AS"/>
</dbReference>
<dbReference type="InterPro" id="IPR019793">
    <property type="entry name" value="Peroxidases_heam-ligand_BS"/>
</dbReference>
<dbReference type="NCBIfam" id="TIGR00198">
    <property type="entry name" value="cat_per_HPI"/>
    <property type="match status" value="1"/>
</dbReference>
<dbReference type="NCBIfam" id="NF011635">
    <property type="entry name" value="PRK15061.1"/>
    <property type="match status" value="1"/>
</dbReference>
<dbReference type="PANTHER" id="PTHR30555:SF0">
    <property type="entry name" value="CATALASE-PEROXIDASE"/>
    <property type="match status" value="1"/>
</dbReference>
<dbReference type="PANTHER" id="PTHR30555">
    <property type="entry name" value="HYDROPEROXIDASE I, BIFUNCTIONAL CATALASE-PEROXIDASE"/>
    <property type="match status" value="1"/>
</dbReference>
<dbReference type="Pfam" id="PF00141">
    <property type="entry name" value="peroxidase"/>
    <property type="match status" value="2"/>
</dbReference>
<dbReference type="PRINTS" id="PR00460">
    <property type="entry name" value="BPEROXIDASE"/>
</dbReference>
<dbReference type="PRINTS" id="PR00458">
    <property type="entry name" value="PEROXIDASE"/>
</dbReference>
<dbReference type="SUPFAM" id="SSF48113">
    <property type="entry name" value="Heme-dependent peroxidases"/>
    <property type="match status" value="2"/>
</dbReference>
<dbReference type="PROSITE" id="PS00435">
    <property type="entry name" value="PEROXIDASE_1"/>
    <property type="match status" value="1"/>
</dbReference>
<dbReference type="PROSITE" id="PS00436">
    <property type="entry name" value="PEROXIDASE_2"/>
    <property type="match status" value="1"/>
</dbReference>
<dbReference type="PROSITE" id="PS50873">
    <property type="entry name" value="PEROXIDASE_4"/>
    <property type="match status" value="1"/>
</dbReference>
<organism>
    <name type="scientific">Allorhizobium ampelinum (strain ATCC BAA-846 / DSM 112012 / S4)</name>
    <name type="common">Agrobacterium vitis (strain S4)</name>
    <dbReference type="NCBI Taxonomy" id="311402"/>
    <lineage>
        <taxon>Bacteria</taxon>
        <taxon>Pseudomonadati</taxon>
        <taxon>Pseudomonadota</taxon>
        <taxon>Alphaproteobacteria</taxon>
        <taxon>Hyphomicrobiales</taxon>
        <taxon>Rhizobiaceae</taxon>
        <taxon>Rhizobium/Agrobacterium group</taxon>
        <taxon>Allorhizobium</taxon>
        <taxon>Allorhizobium ampelinum</taxon>
    </lineage>
</organism>
<reference key="1">
    <citation type="journal article" date="2009" name="J. Bacteriol.">
        <title>Genome sequences of three Agrobacterium biovars help elucidate the evolution of multichromosome genomes in bacteria.</title>
        <authorList>
            <person name="Slater S.C."/>
            <person name="Goldman B.S."/>
            <person name="Goodner B."/>
            <person name="Setubal J.C."/>
            <person name="Farrand S.K."/>
            <person name="Nester E.W."/>
            <person name="Burr T.J."/>
            <person name="Banta L."/>
            <person name="Dickerman A.W."/>
            <person name="Paulsen I."/>
            <person name="Otten L."/>
            <person name="Suen G."/>
            <person name="Welch R."/>
            <person name="Almeida N.F."/>
            <person name="Arnold F."/>
            <person name="Burton O.T."/>
            <person name="Du Z."/>
            <person name="Ewing A."/>
            <person name="Godsy E."/>
            <person name="Heisel S."/>
            <person name="Houmiel K.L."/>
            <person name="Jhaveri J."/>
            <person name="Lu J."/>
            <person name="Miller N.M."/>
            <person name="Norton S."/>
            <person name="Chen Q."/>
            <person name="Phoolcharoen W."/>
            <person name="Ohlin V."/>
            <person name="Ondrusek D."/>
            <person name="Pride N."/>
            <person name="Stricklin S.L."/>
            <person name="Sun J."/>
            <person name="Wheeler C."/>
            <person name="Wilson L."/>
            <person name="Zhu H."/>
            <person name="Wood D.W."/>
        </authorList>
    </citation>
    <scope>NUCLEOTIDE SEQUENCE [LARGE SCALE GENOMIC DNA]</scope>
    <source>
        <strain>ATCC BAA-846 / DSM 112012 / S4</strain>
    </source>
</reference>
<name>KATG_ALLAM</name>
<keyword id="KW-0349">Heme</keyword>
<keyword id="KW-0376">Hydrogen peroxide</keyword>
<keyword id="KW-0408">Iron</keyword>
<keyword id="KW-0479">Metal-binding</keyword>
<keyword id="KW-0560">Oxidoreductase</keyword>
<keyword id="KW-0575">Peroxidase</keyword>
<keyword id="KW-1185">Reference proteome</keyword>
<accession>B9K0G2</accession>
<feature type="chain" id="PRO_1000189070" description="Catalase-peroxidase">
    <location>
        <begin position="1"/>
        <end position="727"/>
    </location>
</feature>
<feature type="region of interest" description="Disordered" evidence="2">
    <location>
        <begin position="1"/>
        <end position="26"/>
    </location>
</feature>
<feature type="active site" description="Proton acceptor" evidence="1">
    <location>
        <position position="98"/>
    </location>
</feature>
<feature type="binding site" description="axial binding residue" evidence="1">
    <location>
        <position position="260"/>
    </location>
    <ligand>
        <name>heme b</name>
        <dbReference type="ChEBI" id="CHEBI:60344"/>
    </ligand>
    <ligandPart>
        <name>Fe</name>
        <dbReference type="ChEBI" id="CHEBI:18248"/>
    </ligandPart>
</feature>
<feature type="site" description="Transition state stabilizer" evidence="1">
    <location>
        <position position="94"/>
    </location>
</feature>
<feature type="cross-link" description="Tryptophyl-tyrosyl-methioninium (Trp-Tyr) (with M-245)" evidence="1">
    <location>
        <begin position="97"/>
        <end position="219"/>
    </location>
</feature>
<feature type="cross-link" description="Tryptophyl-tyrosyl-methioninium (Tyr-Met) (with W-97)" evidence="1">
    <location>
        <begin position="219"/>
        <end position="245"/>
    </location>
</feature>
<protein>
    <recommendedName>
        <fullName evidence="1">Catalase-peroxidase</fullName>
        <shortName evidence="1">CP</shortName>
        <ecNumber evidence="1">1.11.1.21</ecNumber>
    </recommendedName>
    <alternativeName>
        <fullName evidence="1">Peroxidase/catalase</fullName>
    </alternativeName>
</protein>
<gene>
    <name evidence="1" type="primary">katG</name>
    <name type="ordered locus">Avi_5190</name>
</gene>